<dbReference type="EMBL" id="Z73586">
    <property type="protein sequence ID" value="CAA97946.1"/>
    <property type="molecule type" value="Genomic_DNA"/>
</dbReference>
<dbReference type="EMBL" id="X94561">
    <property type="protein sequence ID" value="CAA64257.1"/>
    <property type="molecule type" value="Genomic_DNA"/>
</dbReference>
<dbReference type="EMBL" id="BK006949">
    <property type="protein sequence ID" value="DAA11206.1"/>
    <property type="molecule type" value="Genomic_DNA"/>
</dbReference>
<dbReference type="PIR" id="S61704">
    <property type="entry name" value="S61704"/>
</dbReference>
<dbReference type="RefSeq" id="NP_015094.1">
    <property type="nucleotide sequence ID" value="NM_001184044.1"/>
</dbReference>
<dbReference type="SMR" id="Q12132"/>
<dbReference type="BioGRID" id="35955">
    <property type="interactions" value="101"/>
</dbReference>
<dbReference type="FunCoup" id="Q12132">
    <property type="interactions" value="218"/>
</dbReference>
<dbReference type="STRING" id="4932.YPL230W"/>
<dbReference type="GlyGen" id="Q12132">
    <property type="glycosylation" value="1 site, 1 O-linked glycan (1 site)"/>
</dbReference>
<dbReference type="iPTMnet" id="Q12132"/>
<dbReference type="PaxDb" id="4932-YPL230W"/>
<dbReference type="PeptideAtlas" id="Q12132"/>
<dbReference type="EnsemblFungi" id="YPL230W_mRNA">
    <property type="protein sequence ID" value="YPL230W"/>
    <property type="gene ID" value="YPL230W"/>
</dbReference>
<dbReference type="GeneID" id="855871"/>
<dbReference type="KEGG" id="sce:YPL230W"/>
<dbReference type="AGR" id="SGD:S000006151"/>
<dbReference type="SGD" id="S000006151">
    <property type="gene designation" value="USV1"/>
</dbReference>
<dbReference type="VEuPathDB" id="FungiDB:YPL230W"/>
<dbReference type="eggNOG" id="KOG1721">
    <property type="taxonomic scope" value="Eukaryota"/>
</dbReference>
<dbReference type="GeneTree" id="ENSGT00940000176682"/>
<dbReference type="HOGENOM" id="CLU_704392_0_0_1"/>
<dbReference type="InParanoid" id="Q12132"/>
<dbReference type="OMA" id="RSIYNTQ"/>
<dbReference type="OrthoDB" id="10018191at2759"/>
<dbReference type="BioCyc" id="YEAST:G3O-34118-MONOMER"/>
<dbReference type="BioGRID-ORCS" id="855871">
    <property type="hits" value="0 hits in 13 CRISPR screens"/>
</dbReference>
<dbReference type="PRO" id="PR:Q12132"/>
<dbReference type="Proteomes" id="UP000002311">
    <property type="component" value="Chromosome XVI"/>
</dbReference>
<dbReference type="RNAct" id="Q12132">
    <property type="molecule type" value="protein"/>
</dbReference>
<dbReference type="GO" id="GO:0005634">
    <property type="term" value="C:nucleus"/>
    <property type="evidence" value="ECO:0000314"/>
    <property type="project" value="SGD"/>
</dbReference>
<dbReference type="GO" id="GO:0000981">
    <property type="term" value="F:DNA-binding transcription factor activity, RNA polymerase II-specific"/>
    <property type="evidence" value="ECO:0007669"/>
    <property type="project" value="InterPro"/>
</dbReference>
<dbReference type="GO" id="GO:0000978">
    <property type="term" value="F:RNA polymerase II cis-regulatory region sequence-specific DNA binding"/>
    <property type="evidence" value="ECO:0007669"/>
    <property type="project" value="InterPro"/>
</dbReference>
<dbReference type="GO" id="GO:0043565">
    <property type="term" value="F:sequence-specific DNA binding"/>
    <property type="evidence" value="ECO:0007005"/>
    <property type="project" value="SGD"/>
</dbReference>
<dbReference type="GO" id="GO:0008270">
    <property type="term" value="F:zinc ion binding"/>
    <property type="evidence" value="ECO:0007669"/>
    <property type="project" value="UniProtKB-KW"/>
</dbReference>
<dbReference type="GO" id="GO:0071472">
    <property type="term" value="P:cellular response to salt stress"/>
    <property type="evidence" value="ECO:0000315"/>
    <property type="project" value="SGD"/>
</dbReference>
<dbReference type="GO" id="GO:0006357">
    <property type="term" value="P:regulation of transcription by RNA polymerase II"/>
    <property type="evidence" value="ECO:0000315"/>
    <property type="project" value="SGD"/>
</dbReference>
<dbReference type="FunFam" id="3.30.160.60:FF:000032">
    <property type="entry name" value="Krueppel-like factor 4"/>
    <property type="match status" value="1"/>
</dbReference>
<dbReference type="Gene3D" id="3.30.160.60">
    <property type="entry name" value="Classic Zinc Finger"/>
    <property type="match status" value="2"/>
</dbReference>
<dbReference type="InterPro" id="IPR051059">
    <property type="entry name" value="VerF-like"/>
</dbReference>
<dbReference type="InterPro" id="IPR036236">
    <property type="entry name" value="Znf_C2H2_sf"/>
</dbReference>
<dbReference type="InterPro" id="IPR013087">
    <property type="entry name" value="Znf_C2H2_type"/>
</dbReference>
<dbReference type="PANTHER" id="PTHR40626">
    <property type="entry name" value="MIP31509P"/>
    <property type="match status" value="1"/>
</dbReference>
<dbReference type="PANTHER" id="PTHR40626:SF32">
    <property type="entry name" value="ZINC FINGER PROTEIN RST2"/>
    <property type="match status" value="1"/>
</dbReference>
<dbReference type="Pfam" id="PF00096">
    <property type="entry name" value="zf-C2H2"/>
    <property type="match status" value="2"/>
</dbReference>
<dbReference type="SMART" id="SM00355">
    <property type="entry name" value="ZnF_C2H2"/>
    <property type="match status" value="2"/>
</dbReference>
<dbReference type="SUPFAM" id="SSF57667">
    <property type="entry name" value="beta-beta-alpha zinc fingers"/>
    <property type="match status" value="1"/>
</dbReference>
<dbReference type="PROSITE" id="PS00028">
    <property type="entry name" value="ZINC_FINGER_C2H2_1"/>
    <property type="match status" value="1"/>
</dbReference>
<dbReference type="PROSITE" id="PS50157">
    <property type="entry name" value="ZINC_FINGER_C2H2_2"/>
    <property type="match status" value="2"/>
</dbReference>
<feature type="chain" id="PRO_0000255973" description="Nutrient and stress factor 1">
    <location>
        <begin position="1"/>
        <end position="391"/>
    </location>
</feature>
<feature type="zinc finger region" description="C2H2-type 1" evidence="1">
    <location>
        <begin position="41"/>
        <end position="66"/>
    </location>
</feature>
<feature type="zinc finger region" description="C2H2-type 2" evidence="1">
    <location>
        <begin position="72"/>
        <end position="95"/>
    </location>
</feature>
<feature type="region of interest" description="Disordered" evidence="2">
    <location>
        <begin position="1"/>
        <end position="37"/>
    </location>
</feature>
<feature type="region of interest" description="Disordered" evidence="2">
    <location>
        <begin position="91"/>
        <end position="149"/>
    </location>
</feature>
<feature type="region of interest" description="Disordered" evidence="2">
    <location>
        <begin position="326"/>
        <end position="374"/>
    </location>
</feature>
<feature type="compositionally biased region" description="Polar residues" evidence="2">
    <location>
        <begin position="1"/>
        <end position="27"/>
    </location>
</feature>
<feature type="compositionally biased region" description="Basic residues" evidence="2">
    <location>
        <begin position="96"/>
        <end position="109"/>
    </location>
</feature>
<feature type="compositionally biased region" description="Low complexity" evidence="2">
    <location>
        <begin position="110"/>
        <end position="134"/>
    </location>
</feature>
<feature type="compositionally biased region" description="Low complexity" evidence="2">
    <location>
        <begin position="332"/>
        <end position="344"/>
    </location>
</feature>
<feature type="compositionally biased region" description="Basic and acidic residues" evidence="2">
    <location>
        <begin position="353"/>
        <end position="369"/>
    </location>
</feature>
<feature type="modified residue" description="Phosphoserine" evidence="6">
    <location>
        <position position="162"/>
    </location>
</feature>
<feature type="modified residue" description="Phosphoserine" evidence="6">
    <location>
        <position position="163"/>
    </location>
</feature>
<accession>Q12132</accession>
<accession>D6W3E0</accession>
<organism>
    <name type="scientific">Saccharomyces cerevisiae (strain ATCC 204508 / S288c)</name>
    <name type="common">Baker's yeast</name>
    <dbReference type="NCBI Taxonomy" id="559292"/>
    <lineage>
        <taxon>Eukaryota</taxon>
        <taxon>Fungi</taxon>
        <taxon>Dikarya</taxon>
        <taxon>Ascomycota</taxon>
        <taxon>Saccharomycotina</taxon>
        <taxon>Saccharomycetes</taxon>
        <taxon>Saccharomycetales</taxon>
        <taxon>Saccharomycetaceae</taxon>
        <taxon>Saccharomyces</taxon>
    </lineage>
</organism>
<evidence type="ECO:0000255" key="1">
    <source>
        <dbReference type="PROSITE-ProRule" id="PRU00042"/>
    </source>
</evidence>
<evidence type="ECO:0000256" key="2">
    <source>
        <dbReference type="SAM" id="MobiDB-lite"/>
    </source>
</evidence>
<evidence type="ECO:0000269" key="3">
    <source>
    </source>
</evidence>
<evidence type="ECO:0000269" key="4">
    <source>
    </source>
</evidence>
<evidence type="ECO:0000269" key="5">
    <source>
    </source>
</evidence>
<evidence type="ECO:0007744" key="6">
    <source>
    </source>
</evidence>
<name>USV1_YEAST</name>
<protein>
    <recommendedName>
        <fullName>Nutrient and stress factor 1</fullName>
    </recommendedName>
    <alternativeName>
        <fullName>Up in starvation protein 1</fullName>
    </alternativeName>
</protein>
<sequence length="391" mass="43518">MENTTNRNTAGVLTSSNGNFATNSVAASTPKRSKSARRKTFKCTGYDGCTMSFTRAEHLARHIRKHTGEKPFQCPACLKFFSRVDNLKQHRESVHAHKNHHSTSSHQRKPSSSSLSSSSSASSSSSASSSTSYSDPYRKTNINSGNMPMMAENEKAPQIIHSSPEFITSTRSIPPISPRSIYNTQRQQQHQQQQHQQAPYYFPSHPITDSYYQYPLPSNNNTINYLPSVDVQYPLNVSPSSTSHPASEVIISSFPPRSMPSTSFKYKDSADFQARTTMNKYNIRPSNINVNTSNINNHLDSFSPPFSPSTTVAEAKPIILPQYQQAFSQPPNGNKNNNMSSSKNGGKGGENFKNTDDRNDNNNKKRSETLSESDISVNTNKKRLSVDYILT</sequence>
<gene>
    <name type="primary">USV1</name>
    <name type="synonym">NSF1</name>
    <name type="ordered locus">YPL230W</name>
    <name type="ORF">P1421</name>
</gene>
<comment type="function">
    <text evidence="3 4 5">Transcription factor that participates in the transcriptional activation of glucose-repressed genes during exponential growth in non-fermentable carbon conditions. Also involved in salt-stress response.</text>
</comment>
<comment type="subcellular location">
    <subcellularLocation>
        <location evidence="4">Nucleus</location>
    </subcellularLocation>
    <text>Found in the nucleus in conditions under which NSF1 is actively transcribed, such as growth with non-fermentable carbon sources or salt stress.</text>
</comment>
<comment type="induction">
    <text evidence="4">Repressed by glucose but is activated in the presence of non-fermentable carbon sources or salt stress. The latter transcriptional activation of NSF1 is partially dependent on the SNF1 signaling pathway.</text>
</comment>
<proteinExistence type="evidence at protein level"/>
<reference key="1">
    <citation type="journal article" date="1997" name="Nature">
        <title>The nucleotide sequence of Saccharomyces cerevisiae chromosome XVI.</title>
        <authorList>
            <person name="Bussey H."/>
            <person name="Storms R.K."/>
            <person name="Ahmed A."/>
            <person name="Albermann K."/>
            <person name="Allen E."/>
            <person name="Ansorge W."/>
            <person name="Araujo R."/>
            <person name="Aparicio A."/>
            <person name="Barrell B.G."/>
            <person name="Badcock K."/>
            <person name="Benes V."/>
            <person name="Botstein D."/>
            <person name="Bowman S."/>
            <person name="Brueckner M."/>
            <person name="Carpenter J."/>
            <person name="Cherry J.M."/>
            <person name="Chung E."/>
            <person name="Churcher C.M."/>
            <person name="Coster F."/>
            <person name="Davis K."/>
            <person name="Davis R.W."/>
            <person name="Dietrich F.S."/>
            <person name="Delius H."/>
            <person name="DiPaolo T."/>
            <person name="Dubois E."/>
            <person name="Duesterhoeft A."/>
            <person name="Duncan M."/>
            <person name="Floeth M."/>
            <person name="Fortin N."/>
            <person name="Friesen J.D."/>
            <person name="Fritz C."/>
            <person name="Goffeau A."/>
            <person name="Hall J."/>
            <person name="Hebling U."/>
            <person name="Heumann K."/>
            <person name="Hilbert H."/>
            <person name="Hillier L.W."/>
            <person name="Hunicke-Smith S."/>
            <person name="Hyman R.W."/>
            <person name="Johnston M."/>
            <person name="Kalman S."/>
            <person name="Kleine K."/>
            <person name="Komp C."/>
            <person name="Kurdi O."/>
            <person name="Lashkari D."/>
            <person name="Lew H."/>
            <person name="Lin A."/>
            <person name="Lin D."/>
            <person name="Louis E.J."/>
            <person name="Marathe R."/>
            <person name="Messenguy F."/>
            <person name="Mewes H.-W."/>
            <person name="Mirtipati S."/>
            <person name="Moestl D."/>
            <person name="Mueller-Auer S."/>
            <person name="Namath A."/>
            <person name="Nentwich U."/>
            <person name="Oefner P."/>
            <person name="Pearson D."/>
            <person name="Petel F.X."/>
            <person name="Pohl T.M."/>
            <person name="Purnelle B."/>
            <person name="Rajandream M.A."/>
            <person name="Rechmann S."/>
            <person name="Rieger M."/>
            <person name="Riles L."/>
            <person name="Roberts D."/>
            <person name="Schaefer M."/>
            <person name="Scharfe M."/>
            <person name="Scherens B."/>
            <person name="Schramm S."/>
            <person name="Schroeder M."/>
            <person name="Sdicu A.-M."/>
            <person name="Tettelin H."/>
            <person name="Urrestarazu L.A."/>
            <person name="Ushinsky S."/>
            <person name="Vierendeels F."/>
            <person name="Vissers S."/>
            <person name="Voss H."/>
            <person name="Walsh S.V."/>
            <person name="Wambutt R."/>
            <person name="Wang Y."/>
            <person name="Wedler E."/>
            <person name="Wedler H."/>
            <person name="Winnett E."/>
            <person name="Zhong W.-W."/>
            <person name="Zollner A."/>
            <person name="Vo D.H."/>
            <person name="Hani J."/>
        </authorList>
    </citation>
    <scope>NUCLEOTIDE SEQUENCE [LARGE SCALE GENOMIC DNA]</scope>
    <source>
        <strain>ATCC 204508 / S288c</strain>
    </source>
</reference>
<reference key="2">
    <citation type="journal article" date="2014" name="G3 (Bethesda)">
        <title>The reference genome sequence of Saccharomyces cerevisiae: Then and now.</title>
        <authorList>
            <person name="Engel S.R."/>
            <person name="Dietrich F.S."/>
            <person name="Fisk D.G."/>
            <person name="Binkley G."/>
            <person name="Balakrishnan R."/>
            <person name="Costanzo M.C."/>
            <person name="Dwight S.S."/>
            <person name="Hitz B.C."/>
            <person name="Karra K."/>
            <person name="Nash R.S."/>
            <person name="Weng S."/>
            <person name="Wong E.D."/>
            <person name="Lloyd P."/>
            <person name="Skrzypek M.S."/>
            <person name="Miyasato S.R."/>
            <person name="Simison M."/>
            <person name="Cherry J.M."/>
        </authorList>
    </citation>
    <scope>GENOME REANNOTATION</scope>
    <source>
        <strain>ATCC 204508 / S288c</strain>
    </source>
</reference>
<reference key="3">
    <citation type="journal article" date="1997" name="Nucleic Acids Res.">
        <title>Variations of the C2H2 zinc finger motif in the yeast genome and classification of yeast zinc finger proteins.</title>
        <authorList>
            <person name="Boehm S."/>
            <person name="Frishman D."/>
            <person name="Mewes H.-W."/>
        </authorList>
    </citation>
    <scope>DOMAIN</scope>
</reference>
<reference key="4">
    <citation type="journal article" date="2003" name="Nat. Genet.">
        <title>Module networks: identifying regulatory modules and their condition-specific regulators from gene expression data.</title>
        <authorList>
            <person name="Segal E."/>
            <person name="Shapira M."/>
            <person name="Regev A."/>
            <person name="Pe'er D."/>
            <person name="Botstein D."/>
            <person name="Koller D."/>
            <person name="Friedman N."/>
        </authorList>
    </citation>
    <scope>FUNCTION</scope>
</reference>
<reference key="5">
    <citation type="journal article" date="2008" name="Microbiology">
        <title>Nsf1/Ypl230w participates in transcriptional activation during non-fermentative growth and in response to salt stress in Saccharomyces cerevisiae.</title>
        <authorList>
            <person name="Hlynialuk C."/>
            <person name="Schierholtz R."/>
            <person name="Vernooy A."/>
            <person name="van der Merwe G."/>
        </authorList>
    </citation>
    <scope>INDUCTION</scope>
    <scope>SUBCELLULAR LOCATION</scope>
    <scope>FUNCTION</scope>
</reference>
<reference key="6">
    <citation type="journal article" date="2009" name="PLoS Genet.">
        <title>Genome-wide analysis of factors affecting transcription elongation and DNA repair: a new role for PAF and Ccr4-not in transcription-coupled repair.</title>
        <authorList>
            <person name="Gaillard H."/>
            <person name="Tous C."/>
            <person name="Botet J."/>
            <person name="Gonzalez-Aguilera C."/>
            <person name="Quintero M.J."/>
            <person name="Viladevall L."/>
            <person name="Garcia-Rubio M.L."/>
            <person name="Rodriguez-Gil A."/>
            <person name="Marin A."/>
            <person name="Arino J."/>
            <person name="Revuelta J.L."/>
            <person name="Chavez S."/>
            <person name="Aguilera A."/>
        </authorList>
    </citation>
    <scope>FUNCTION</scope>
</reference>
<reference key="7">
    <citation type="journal article" date="2009" name="Science">
        <title>Global analysis of Cdk1 substrate phosphorylation sites provides insights into evolution.</title>
        <authorList>
            <person name="Holt L.J."/>
            <person name="Tuch B.B."/>
            <person name="Villen J."/>
            <person name="Johnson A.D."/>
            <person name="Gygi S.P."/>
            <person name="Morgan D.O."/>
        </authorList>
    </citation>
    <scope>PHOSPHORYLATION [LARGE SCALE ANALYSIS] AT SER-162 AND SER-163</scope>
    <scope>IDENTIFICATION BY MASS SPECTROMETRY [LARGE SCALE ANALYSIS]</scope>
</reference>
<keyword id="KW-0238">DNA-binding</keyword>
<keyword id="KW-0479">Metal-binding</keyword>
<keyword id="KW-0539">Nucleus</keyword>
<keyword id="KW-0597">Phosphoprotein</keyword>
<keyword id="KW-1185">Reference proteome</keyword>
<keyword id="KW-0677">Repeat</keyword>
<keyword id="KW-0804">Transcription</keyword>
<keyword id="KW-0805">Transcription regulation</keyword>
<keyword id="KW-0862">Zinc</keyword>
<keyword id="KW-0863">Zinc-finger</keyword>